<organism evidence="8">
    <name type="scientific">Arabidopsis thaliana</name>
    <name type="common">Mouse-ear cress</name>
    <dbReference type="NCBI Taxonomy" id="3702"/>
    <lineage>
        <taxon>Eukaryota</taxon>
        <taxon>Viridiplantae</taxon>
        <taxon>Streptophyta</taxon>
        <taxon>Embryophyta</taxon>
        <taxon>Tracheophyta</taxon>
        <taxon>Spermatophyta</taxon>
        <taxon>Magnoliopsida</taxon>
        <taxon>eudicotyledons</taxon>
        <taxon>Gunneridae</taxon>
        <taxon>Pentapetalae</taxon>
        <taxon>rosids</taxon>
        <taxon>malvids</taxon>
        <taxon>Brassicales</taxon>
        <taxon>Brassicaceae</taxon>
        <taxon>Camelineae</taxon>
        <taxon>Arabidopsis</taxon>
    </lineage>
</organism>
<protein>
    <recommendedName>
        <fullName evidence="4">CLP protease regulatory subunit CLPX2, mitochondrial</fullName>
    </recommendedName>
</protein>
<feature type="transit peptide" description="Mitochondrion" evidence="2">
    <location>
        <begin position="1"/>
        <end position="66"/>
    </location>
</feature>
<feature type="chain" id="PRO_0000434549" description="CLP protease regulatory subunit CLPX2, mitochondrial">
    <location>
        <begin position="67"/>
        <end position="608"/>
    </location>
</feature>
<feature type="region of interest" description="Disordered" evidence="3">
    <location>
        <begin position="143"/>
        <end position="195"/>
    </location>
</feature>
<feature type="compositionally biased region" description="Acidic residues" evidence="3">
    <location>
        <begin position="172"/>
        <end position="185"/>
    </location>
</feature>
<feature type="binding site" evidence="1">
    <location>
        <begin position="270"/>
        <end position="277"/>
    </location>
    <ligand>
        <name>ATP</name>
        <dbReference type="ChEBI" id="CHEBI:30616"/>
    </ligand>
</feature>
<feature type="sequence conflict" description="In Ref. 1; BAA98151." evidence="5" ref="1">
    <original>S</original>
    <variation>G</variation>
    <location>
        <position position="302"/>
    </location>
</feature>
<dbReference type="EMBL" id="AB025612">
    <property type="protein sequence ID" value="BAA98151.1"/>
    <property type="molecule type" value="Genomic_DNA"/>
</dbReference>
<dbReference type="EMBL" id="CP002688">
    <property type="protein sequence ID" value="AED95863.1"/>
    <property type="molecule type" value="Genomic_DNA"/>
</dbReference>
<dbReference type="RefSeq" id="NP_001332696.1">
    <property type="nucleotide sequence ID" value="NM_001344859.1"/>
</dbReference>
<dbReference type="RefSeq" id="NP_568714.4">
    <property type="nucleotide sequence ID" value="NM_124362.4"/>
</dbReference>
<dbReference type="SMR" id="F4K7F6"/>
<dbReference type="FunCoup" id="F4K7F6">
    <property type="interactions" value="3331"/>
</dbReference>
<dbReference type="STRING" id="3702.F4K7F6"/>
<dbReference type="iPTMnet" id="F4K7F6"/>
<dbReference type="PaxDb" id="3702-AT5G49840.1"/>
<dbReference type="ProteomicsDB" id="220530"/>
<dbReference type="EnsemblPlants" id="AT5G49840.1">
    <property type="protein sequence ID" value="AT5G49840.1"/>
    <property type="gene ID" value="AT5G49840"/>
</dbReference>
<dbReference type="GeneID" id="835047"/>
<dbReference type="Gramene" id="AT5G49840.1">
    <property type="protein sequence ID" value="AT5G49840.1"/>
    <property type="gene ID" value="AT5G49840"/>
</dbReference>
<dbReference type="KEGG" id="ath:AT5G49840"/>
<dbReference type="Araport" id="AT5G49840"/>
<dbReference type="TAIR" id="AT5G49840"/>
<dbReference type="eggNOG" id="KOG0745">
    <property type="taxonomic scope" value="Eukaryota"/>
</dbReference>
<dbReference type="HOGENOM" id="CLU_014218_6_0_1"/>
<dbReference type="InParanoid" id="F4K7F6"/>
<dbReference type="OrthoDB" id="1721884at2759"/>
<dbReference type="PRO" id="PR:F4K7F6"/>
<dbReference type="Proteomes" id="UP000006548">
    <property type="component" value="Chromosome 5"/>
</dbReference>
<dbReference type="ExpressionAtlas" id="F4K7F6">
    <property type="expression patterns" value="baseline and differential"/>
</dbReference>
<dbReference type="GO" id="GO:0005739">
    <property type="term" value="C:mitochondrion"/>
    <property type="evidence" value="ECO:0007669"/>
    <property type="project" value="UniProtKB-SubCell"/>
</dbReference>
<dbReference type="GO" id="GO:0005524">
    <property type="term" value="F:ATP binding"/>
    <property type="evidence" value="ECO:0007669"/>
    <property type="project" value="UniProtKB-KW"/>
</dbReference>
<dbReference type="GO" id="GO:0016887">
    <property type="term" value="F:ATP hydrolysis activity"/>
    <property type="evidence" value="ECO:0007669"/>
    <property type="project" value="InterPro"/>
</dbReference>
<dbReference type="GO" id="GO:0140662">
    <property type="term" value="F:ATP-dependent protein folding chaperone"/>
    <property type="evidence" value="ECO:0007669"/>
    <property type="project" value="InterPro"/>
</dbReference>
<dbReference type="GO" id="GO:0008233">
    <property type="term" value="F:peptidase activity"/>
    <property type="evidence" value="ECO:0007669"/>
    <property type="project" value="UniProtKB-KW"/>
</dbReference>
<dbReference type="GO" id="GO:0051082">
    <property type="term" value="F:unfolded protein binding"/>
    <property type="evidence" value="ECO:0007669"/>
    <property type="project" value="InterPro"/>
</dbReference>
<dbReference type="GO" id="GO:0006508">
    <property type="term" value="P:proteolysis"/>
    <property type="evidence" value="ECO:0007669"/>
    <property type="project" value="UniProtKB-KW"/>
</dbReference>
<dbReference type="CDD" id="cd19497">
    <property type="entry name" value="RecA-like_ClpX"/>
    <property type="match status" value="1"/>
</dbReference>
<dbReference type="FunFam" id="1.10.8.60:FF:000002">
    <property type="entry name" value="ATP-dependent Clp protease ATP-binding subunit ClpX"/>
    <property type="match status" value="1"/>
</dbReference>
<dbReference type="FunFam" id="3.40.50.300:FF:000560">
    <property type="entry name" value="CLP protease regulatory subunit CLPX3 mitochondrial"/>
    <property type="match status" value="1"/>
</dbReference>
<dbReference type="Gene3D" id="1.10.8.60">
    <property type="match status" value="1"/>
</dbReference>
<dbReference type="Gene3D" id="3.40.50.300">
    <property type="entry name" value="P-loop containing nucleotide triphosphate hydrolases"/>
    <property type="match status" value="1"/>
</dbReference>
<dbReference type="InterPro" id="IPR003593">
    <property type="entry name" value="AAA+_ATPase"/>
</dbReference>
<dbReference type="InterPro" id="IPR050052">
    <property type="entry name" value="ATP-dep_Clp_protease_ClpX"/>
</dbReference>
<dbReference type="InterPro" id="IPR003959">
    <property type="entry name" value="ATPase_AAA_core"/>
</dbReference>
<dbReference type="InterPro" id="IPR019489">
    <property type="entry name" value="Clp_ATPase_C"/>
</dbReference>
<dbReference type="InterPro" id="IPR004487">
    <property type="entry name" value="Clp_protease_ATP-bd_su_ClpX"/>
</dbReference>
<dbReference type="InterPro" id="IPR027417">
    <property type="entry name" value="P-loop_NTPase"/>
</dbReference>
<dbReference type="NCBIfam" id="TIGR00382">
    <property type="entry name" value="clpX"/>
    <property type="match status" value="1"/>
</dbReference>
<dbReference type="NCBIfam" id="NF003745">
    <property type="entry name" value="PRK05342.1"/>
    <property type="match status" value="1"/>
</dbReference>
<dbReference type="PANTHER" id="PTHR48102">
    <property type="entry name" value="ATP-DEPENDENT CLP PROTEASE ATP-BINDING SUBUNIT CLPX-LIKE, MITOCHONDRIAL-RELATED"/>
    <property type="match status" value="1"/>
</dbReference>
<dbReference type="PANTHER" id="PTHR48102:SF4">
    <property type="entry name" value="CLP PROTEASE REGULATORY SUBUNIT CLPX2, MITOCHONDRIAL"/>
    <property type="match status" value="1"/>
</dbReference>
<dbReference type="Pfam" id="PF07724">
    <property type="entry name" value="AAA_2"/>
    <property type="match status" value="1"/>
</dbReference>
<dbReference type="Pfam" id="PF10431">
    <property type="entry name" value="ClpB_D2-small"/>
    <property type="match status" value="1"/>
</dbReference>
<dbReference type="SMART" id="SM00382">
    <property type="entry name" value="AAA"/>
    <property type="match status" value="1"/>
</dbReference>
<dbReference type="SMART" id="SM01086">
    <property type="entry name" value="ClpB_D2-small"/>
    <property type="match status" value="1"/>
</dbReference>
<dbReference type="SUPFAM" id="SSF52540">
    <property type="entry name" value="P-loop containing nucleoside triphosphate hydrolases"/>
    <property type="match status" value="1"/>
</dbReference>
<proteinExistence type="inferred from homology"/>
<comment type="function">
    <text evidence="1">ATP-dependent specificity component of the mitochondrial Clp protease. It directs the protease to specific substrates. Can perform chaperone functions in the absence of ClpP.</text>
</comment>
<comment type="subcellular location">
    <subcellularLocation>
        <location evidence="2">Mitochondrion</location>
    </subcellularLocation>
</comment>
<comment type="similarity">
    <text evidence="5">Belongs to the ClpX chaperone family.</text>
</comment>
<keyword id="KW-0067">ATP-binding</keyword>
<keyword id="KW-0378">Hydrolase</keyword>
<keyword id="KW-0496">Mitochondrion</keyword>
<keyword id="KW-0547">Nucleotide-binding</keyword>
<keyword id="KW-0645">Protease</keyword>
<keyword id="KW-1185">Reference proteome</keyword>
<keyword id="KW-0809">Transit peptide</keyword>
<sequence>MFCSLSISRFVSRKTITSSSLLSRSFRFLLSVDSPPHIPLLRPSSNTLIPSSSFSRRIWDSCSGGGGGGGGDDYDHIRSDVNCPRCSAQMHVIFSNRPLSLTAREPGIYQAVNFCSQCKTAFYFRPFKLSPLQGSFIELGKVKGTDDDHDDDDDDQKSFPRNWKIQGLRSDEDGEDADEEEDESNGGDKEKQSVIKLPTPKEICQGLDEFVIGQEKAKKVLSVAVYNHYKRIYHASRKKGSASESYNIDMEDDNIDHVELDKSNVLLLGPTGSGKTLLAKTLARIVNVPFAIADATSLTQASYVGEDVESILYKLYVEAGCNVEEAQRGIVYIDEVDKMTMKSHSSNGGRDVSGEGVQQSLLKLLEGTVVSVPIPEKGLRRDPRGDSIQMDTKDILFICGGAFIDLEKTVSERQHDASIGFGASVRTNMSTSGLSSAAVTSSLLESLQSEDLVAYGLIPEFVGRLPILVSLSALNEDQLVQVLTEPKSALGKQYKKLFRMNNVQLQFTEGATRLIARKAMSKNTGARGLRSILESILTEAMFEVPDSITEGSQSIKAVLVDEEAVGSVGSPGCGAKILKGDNVLQQFVEEAESKEKSKEDEAKRAQSM</sequence>
<name>CLPX2_ARATH</name>
<reference key="1">
    <citation type="submission" date="1999-04" db="EMBL/GenBank/DDBJ databases">
        <title>Structural analysis of Arabidopsis thaliana chromosome 5. XI.</title>
        <authorList>
            <person name="Kaneko T."/>
            <person name="Katoh T."/>
            <person name="Asamizu E."/>
            <person name="Sato S."/>
            <person name="Nakamura Y."/>
            <person name="Kotani H."/>
            <person name="Tabata S."/>
        </authorList>
    </citation>
    <scope>NUCLEOTIDE SEQUENCE [LARGE SCALE GENOMIC DNA]</scope>
    <source>
        <strain>cv. Columbia</strain>
    </source>
</reference>
<reference key="2">
    <citation type="journal article" date="2017" name="Plant J.">
        <title>Araport11: a complete reannotation of the Arabidopsis thaliana reference genome.</title>
        <authorList>
            <person name="Cheng C.Y."/>
            <person name="Krishnakumar V."/>
            <person name="Chan A.P."/>
            <person name="Thibaud-Nissen F."/>
            <person name="Schobel S."/>
            <person name="Town C.D."/>
        </authorList>
    </citation>
    <scope>GENOME REANNOTATION</scope>
    <source>
        <strain evidence="8">cv. Columbia</strain>
    </source>
</reference>
<reference key="3">
    <citation type="journal article" date="2001" name="Plant Mol. Biol.">
        <title>Plant mitochondria contain proteolytic and regulatory subunits of the ATP-dependent Clp protease.</title>
        <authorList>
            <person name="Halperin T."/>
            <person name="Zheng B."/>
            <person name="Itzhaki H."/>
            <person name="Clarke A.K."/>
            <person name="Adam Z."/>
        </authorList>
    </citation>
    <scope>IDENTIFICATION</scope>
</reference>
<reference key="4">
    <citation type="journal article" date="2001" name="Plant Physiol.">
        <title>Chloroplast and mitochondrial proteases in Arabidopsis. A proposed nomenclature.</title>
        <authorList>
            <person name="Adam Z."/>
            <person name="Adamska I."/>
            <person name="Nakabayashi K."/>
            <person name="Ostersetzer O."/>
            <person name="Haussuhl K."/>
            <person name="Manuell A."/>
            <person name="Zheng B."/>
            <person name="Vallon O."/>
            <person name="Rodermel S.R."/>
            <person name="Shinozaki K."/>
            <person name="Clarke A.K."/>
        </authorList>
    </citation>
    <scope>GENE FAMILY</scope>
    <scope>NOMENCLATURE</scope>
</reference>
<reference key="5">
    <citation type="journal article" date="2005" name="Physiol. Plantarum">
        <title>The ATP-dependent Clp protease in chloroplasts of higher plants.</title>
        <authorList>
            <person name="Clarke A.K."/>
            <person name="MacDonald T.M."/>
            <person name="Sjoegren L.L."/>
        </authorList>
    </citation>
    <scope>NOMENCLATURE</scope>
</reference>
<gene>
    <name evidence="4" type="primary">CLPX2</name>
    <name evidence="6" type="ordered locus">At5g49840</name>
    <name evidence="7" type="ORF">K21G20.5</name>
</gene>
<evidence type="ECO:0000250" key="1">
    <source>
        <dbReference type="UniProtKB" id="B1J693"/>
    </source>
</evidence>
<evidence type="ECO:0000255" key="2"/>
<evidence type="ECO:0000256" key="3">
    <source>
        <dbReference type="SAM" id="MobiDB-lite"/>
    </source>
</evidence>
<evidence type="ECO:0000303" key="4">
    <source>
    </source>
</evidence>
<evidence type="ECO:0000305" key="5"/>
<evidence type="ECO:0000312" key="6">
    <source>
        <dbReference type="Araport" id="AT5G49840"/>
    </source>
</evidence>
<evidence type="ECO:0000312" key="7">
    <source>
        <dbReference type="EMBL" id="BAA98151.1"/>
    </source>
</evidence>
<evidence type="ECO:0000312" key="8">
    <source>
        <dbReference type="Proteomes" id="UP000006548"/>
    </source>
</evidence>
<accession>F4K7F6</accession>
<accession>Q9LTA9</accession>